<keyword id="KW-0012">Acyltransferase</keyword>
<keyword id="KW-0276">Fatty acid metabolism</keyword>
<keyword id="KW-0443">Lipid metabolism</keyword>
<keyword id="KW-0479">Metal-binding</keyword>
<keyword id="KW-0496">Mitochondrion</keyword>
<keyword id="KW-0630">Potassium</keyword>
<keyword id="KW-1185">Reference proteome</keyword>
<keyword id="KW-0808">Transferase</keyword>
<keyword id="KW-0809">Transit peptide</keyword>
<evidence type="ECO:0000250" key="1">
    <source>
        <dbReference type="UniProtKB" id="P17764"/>
    </source>
</evidence>
<evidence type="ECO:0000250" key="2">
    <source>
        <dbReference type="UniProtKB" id="P24752"/>
    </source>
</evidence>
<evidence type="ECO:0000255" key="3">
    <source>
        <dbReference type="PROSITE-ProRule" id="PRU10020"/>
    </source>
</evidence>
<evidence type="ECO:0000305" key="4"/>
<feature type="transit peptide" description="Mitochondrion" evidence="1">
    <location>
        <begin position="1"/>
        <end position="26"/>
    </location>
</feature>
<feature type="chain" id="PRO_0000356275" description="Acetyl-CoA acetyltransferase, mitochondrial">
    <location>
        <begin position="27"/>
        <end position="420"/>
    </location>
</feature>
<feature type="active site" description="Acyl-thioester intermediate" evidence="2">
    <location>
        <position position="119"/>
    </location>
</feature>
<feature type="active site" description="Proton donor/acceptor" evidence="2">
    <location>
        <position position="406"/>
    </location>
</feature>
<feature type="binding site" evidence="2">
    <location>
        <position position="212"/>
    </location>
    <ligand>
        <name>CoA</name>
        <dbReference type="ChEBI" id="CHEBI:57287"/>
    </ligand>
</feature>
<feature type="binding site" evidence="2">
    <location>
        <position position="212"/>
    </location>
    <ligand>
        <name>K(+)</name>
        <dbReference type="ChEBI" id="CHEBI:29103"/>
    </ligand>
</feature>
<feature type="binding site" evidence="2">
    <location>
        <begin position="251"/>
        <end position="253"/>
    </location>
    <ligand>
        <name>CoA</name>
        <dbReference type="ChEBI" id="CHEBI:57287"/>
    </ligand>
</feature>
<feature type="binding site" evidence="2">
    <location>
        <position position="256"/>
    </location>
    <ligand>
        <name>CoA</name>
        <dbReference type="ChEBI" id="CHEBI:57287"/>
    </ligand>
</feature>
<feature type="binding site" evidence="2">
    <location>
        <position position="273"/>
    </location>
    <ligand>
        <name>K(+)</name>
        <dbReference type="ChEBI" id="CHEBI:29103"/>
    </ligand>
</feature>
<feature type="binding site" evidence="2">
    <location>
        <position position="274"/>
    </location>
    <ligand>
        <name>K(+)</name>
        <dbReference type="ChEBI" id="CHEBI:29103"/>
    </ligand>
</feature>
<feature type="binding site" evidence="2">
    <location>
        <position position="276"/>
    </location>
    <ligand>
        <name>K(+)</name>
        <dbReference type="ChEBI" id="CHEBI:29103"/>
    </ligand>
</feature>
<feature type="binding site" evidence="2">
    <location>
        <position position="277"/>
    </location>
    <ligand>
        <name>CoA</name>
        <dbReference type="ChEBI" id="CHEBI:57287"/>
    </ligand>
</feature>
<feature type="binding site" evidence="2">
    <location>
        <position position="374"/>
    </location>
    <ligand>
        <name>K(+)</name>
        <dbReference type="ChEBI" id="CHEBI:29103"/>
    </ligand>
</feature>
<feature type="site" description="Increases nucleophilicity of active site Cys" evidence="2">
    <location>
        <position position="378"/>
    </location>
</feature>
<proteinExistence type="evidence at transcript level"/>
<accession>Q6AZA0</accession>
<organism>
    <name type="scientific">Danio rerio</name>
    <name type="common">Zebrafish</name>
    <name type="synonym">Brachydanio rerio</name>
    <dbReference type="NCBI Taxonomy" id="7955"/>
    <lineage>
        <taxon>Eukaryota</taxon>
        <taxon>Metazoa</taxon>
        <taxon>Chordata</taxon>
        <taxon>Craniata</taxon>
        <taxon>Vertebrata</taxon>
        <taxon>Euteleostomi</taxon>
        <taxon>Actinopterygii</taxon>
        <taxon>Neopterygii</taxon>
        <taxon>Teleostei</taxon>
        <taxon>Ostariophysi</taxon>
        <taxon>Cypriniformes</taxon>
        <taxon>Danionidae</taxon>
        <taxon>Danioninae</taxon>
        <taxon>Danio</taxon>
    </lineage>
</organism>
<reference key="1">
    <citation type="submission" date="2004-08" db="EMBL/GenBank/DDBJ databases">
        <authorList>
            <consortium name="NIH - Zebrafish Gene Collection (ZGC) project"/>
        </authorList>
    </citation>
    <scope>NUCLEOTIDE SEQUENCE [LARGE SCALE MRNA]</scope>
    <source>
        <tissue>Embryo</tissue>
    </source>
</reference>
<comment type="function">
    <text evidence="2">This is one of the enzymes that catalyzes the last step of the mitochondrial beta-oxidation pathway, an aerobic process breaking down fatty acids into acetyl-CoA. Using free coenzyme A/CoA, catalyzes the thiolytic cleavage of medium- to long-chain 3-oxoacyl-CoAs into acetyl-CoA and a fatty acyl-CoA shortened by two carbon atoms. The activity of the enzyme is reversible and it can also catalyze the condensation of two acetyl-CoA molecules into acetoacetyl-CoA. Thereby, it plays a major role in ketone body metabolism.</text>
</comment>
<comment type="catalytic activity">
    <reaction evidence="3">
        <text>2 acetyl-CoA = acetoacetyl-CoA + CoA</text>
        <dbReference type="Rhea" id="RHEA:21036"/>
        <dbReference type="ChEBI" id="CHEBI:57286"/>
        <dbReference type="ChEBI" id="CHEBI:57287"/>
        <dbReference type="ChEBI" id="CHEBI:57288"/>
        <dbReference type="EC" id="2.3.1.9"/>
    </reaction>
    <physiologicalReaction direction="left-to-right" evidence="2">
        <dbReference type="Rhea" id="RHEA:21037"/>
    </physiologicalReaction>
    <physiologicalReaction direction="right-to-left" evidence="2">
        <dbReference type="Rhea" id="RHEA:21038"/>
    </physiologicalReaction>
</comment>
<comment type="catalytic activity">
    <reaction evidence="2">
        <text>propanoyl-CoA + acetyl-CoA = 2-methyl-3-oxobutanoyl-CoA + CoA</text>
        <dbReference type="Rhea" id="RHEA:30719"/>
        <dbReference type="ChEBI" id="CHEBI:57287"/>
        <dbReference type="ChEBI" id="CHEBI:57288"/>
        <dbReference type="ChEBI" id="CHEBI:57335"/>
        <dbReference type="ChEBI" id="CHEBI:57392"/>
    </reaction>
    <physiologicalReaction direction="left-to-right" evidence="2">
        <dbReference type="Rhea" id="RHEA:30720"/>
    </physiologicalReaction>
    <physiologicalReaction direction="right-to-left" evidence="2">
        <dbReference type="Rhea" id="RHEA:30721"/>
    </physiologicalReaction>
</comment>
<comment type="pathway">
    <text evidence="2">Lipid metabolism; fatty acid beta-oxidation.</text>
</comment>
<comment type="subunit">
    <text evidence="2">Homotetramer.</text>
</comment>
<comment type="subcellular location">
    <subcellularLocation>
        <location evidence="2">Mitochondrion</location>
    </subcellularLocation>
</comment>
<comment type="similarity">
    <text evidence="4">Belongs to the thiolase-like superfamily. Thiolase family.</text>
</comment>
<protein>
    <recommendedName>
        <fullName>Acetyl-CoA acetyltransferase, mitochondrial</fullName>
        <ecNumber evidence="2">2.3.1.9</ecNumber>
    </recommendedName>
    <alternativeName>
        <fullName>Acetoacetyl-CoA thiolase</fullName>
    </alternativeName>
</protein>
<name>THIL_DANRE</name>
<sequence length="420" mass="44342">MTSRALYSTRSQLCRHLAHKYLSRSYSTRPSLNEVVIVSAVRTPIGSFKGSLSTLPATKLGSIAIKGAIDKAGIPVEEVKEVYMGNVLQAGEGQAPTRQALLGAGLPLSTPATTINKVCASGMKSIMLASQSLMCGHQDVMVAGGMESMSQVPYIMAREAPPYGGVKMEDLIVKDGLTDVYNKFHMGNCAENTAKNSSISREEQDAFAIKSYTLSKAAWESGILAKEVVPVSIPQRGKPDVVVKEDEEYRKVDFSKVPKLKAVFLKENGTVTAANASTLNDGAAALVLMTADAAQRLNVTPLAKIVAFADAAVAPIDFPIAPAFAVPKVLKAAGIKKEDIAMWEINEAFSVVVLANIKMLDIDPDRVNINGGAVSLGHPIGMSGARIVGHMVHNLKSGQYGLAGICNGGGGASSIVIQKF</sequence>
<gene>
    <name type="primary">acat1</name>
</gene>
<dbReference type="EC" id="2.3.1.9" evidence="2"/>
<dbReference type="EMBL" id="BC078651">
    <property type="protein sequence ID" value="AAH78651.1"/>
    <property type="molecule type" value="mRNA"/>
</dbReference>
<dbReference type="RefSeq" id="NP_001003746.1">
    <property type="nucleotide sequence ID" value="NM_001003746.1"/>
</dbReference>
<dbReference type="SMR" id="Q6AZA0"/>
<dbReference type="FunCoup" id="Q6AZA0">
    <property type="interactions" value="2157"/>
</dbReference>
<dbReference type="STRING" id="7955.ENSDARP00000133230"/>
<dbReference type="PaxDb" id="7955-ENSDARP00000067447"/>
<dbReference type="PeptideAtlas" id="Q6AZA0"/>
<dbReference type="Ensembl" id="ENSDART00000170182">
    <property type="protein sequence ID" value="ENSDARP00000133230"/>
    <property type="gene ID" value="ENSDARG00000045888"/>
</dbReference>
<dbReference type="GeneID" id="445290"/>
<dbReference type="KEGG" id="dre:445290"/>
<dbReference type="AGR" id="ZFIN:ZDB-GENE-040808-68"/>
<dbReference type="CTD" id="38"/>
<dbReference type="ZFIN" id="ZDB-GENE-040808-68">
    <property type="gene designation" value="acat1"/>
</dbReference>
<dbReference type="eggNOG" id="KOG1390">
    <property type="taxonomic scope" value="Eukaryota"/>
</dbReference>
<dbReference type="HOGENOM" id="CLU_031026_0_1_1"/>
<dbReference type="InParanoid" id="Q6AZA0"/>
<dbReference type="OMA" id="SMGTFGE"/>
<dbReference type="OrthoDB" id="5404651at2759"/>
<dbReference type="PhylomeDB" id="Q6AZA0"/>
<dbReference type="TreeFam" id="TF300650"/>
<dbReference type="Reactome" id="R-DRE-70895">
    <property type="pathway name" value="Branched-chain amino acid catabolism"/>
</dbReference>
<dbReference type="Reactome" id="R-DRE-77108">
    <property type="pathway name" value="Utilization of Ketone Bodies"/>
</dbReference>
<dbReference type="Reactome" id="R-DRE-77111">
    <property type="pathway name" value="Synthesis of Ketone Bodies"/>
</dbReference>
<dbReference type="Reactome" id="R-DRE-9854311">
    <property type="pathway name" value="Maturation of TCA enzymes and regulation of TCA cycle"/>
</dbReference>
<dbReference type="UniPathway" id="UPA00659"/>
<dbReference type="PRO" id="PR:Q6AZA0"/>
<dbReference type="Proteomes" id="UP000000437">
    <property type="component" value="Chromosome 10"/>
</dbReference>
<dbReference type="Bgee" id="ENSDARG00000045888">
    <property type="expression patterns" value="Expressed in cardiac ventricle and 27 other cell types or tissues"/>
</dbReference>
<dbReference type="ExpressionAtlas" id="Q6AZA0">
    <property type="expression patterns" value="baseline and differential"/>
</dbReference>
<dbReference type="GO" id="GO:0005739">
    <property type="term" value="C:mitochondrion"/>
    <property type="evidence" value="ECO:0000318"/>
    <property type="project" value="GO_Central"/>
</dbReference>
<dbReference type="GO" id="GO:0003985">
    <property type="term" value="F:acetyl-CoA C-acetyltransferase activity"/>
    <property type="evidence" value="ECO:0000318"/>
    <property type="project" value="GO_Central"/>
</dbReference>
<dbReference type="GO" id="GO:0046872">
    <property type="term" value="F:metal ion binding"/>
    <property type="evidence" value="ECO:0007669"/>
    <property type="project" value="UniProtKB-KW"/>
</dbReference>
<dbReference type="GO" id="GO:0006635">
    <property type="term" value="P:fatty acid beta-oxidation"/>
    <property type="evidence" value="ECO:0007669"/>
    <property type="project" value="UniProtKB-UniPathway"/>
</dbReference>
<dbReference type="CDD" id="cd00751">
    <property type="entry name" value="thiolase"/>
    <property type="match status" value="1"/>
</dbReference>
<dbReference type="FunFam" id="3.40.47.10:FF:000150">
    <property type="match status" value="1"/>
</dbReference>
<dbReference type="FunFam" id="3.40.47.10:FF:000127">
    <property type="entry name" value="Acetyl-CoA acetyltransferase, putative"/>
    <property type="match status" value="1"/>
</dbReference>
<dbReference type="Gene3D" id="3.40.47.10">
    <property type="match status" value="1"/>
</dbReference>
<dbReference type="InterPro" id="IPR002155">
    <property type="entry name" value="Thiolase"/>
</dbReference>
<dbReference type="InterPro" id="IPR016039">
    <property type="entry name" value="Thiolase-like"/>
</dbReference>
<dbReference type="InterPro" id="IPR020615">
    <property type="entry name" value="Thiolase_acyl_enz_int_AS"/>
</dbReference>
<dbReference type="InterPro" id="IPR020610">
    <property type="entry name" value="Thiolase_AS"/>
</dbReference>
<dbReference type="InterPro" id="IPR020617">
    <property type="entry name" value="Thiolase_C"/>
</dbReference>
<dbReference type="InterPro" id="IPR020613">
    <property type="entry name" value="Thiolase_CS"/>
</dbReference>
<dbReference type="InterPro" id="IPR020616">
    <property type="entry name" value="Thiolase_N"/>
</dbReference>
<dbReference type="NCBIfam" id="TIGR01930">
    <property type="entry name" value="AcCoA-C-Actrans"/>
    <property type="match status" value="1"/>
</dbReference>
<dbReference type="PANTHER" id="PTHR18919:SF156">
    <property type="entry name" value="ACETYL-COA ACETYLTRANSFERASE, MITOCHONDRIAL"/>
    <property type="match status" value="1"/>
</dbReference>
<dbReference type="PANTHER" id="PTHR18919">
    <property type="entry name" value="ACETYL-COA C-ACYLTRANSFERASE"/>
    <property type="match status" value="1"/>
</dbReference>
<dbReference type="Pfam" id="PF02803">
    <property type="entry name" value="Thiolase_C"/>
    <property type="match status" value="1"/>
</dbReference>
<dbReference type="Pfam" id="PF00108">
    <property type="entry name" value="Thiolase_N"/>
    <property type="match status" value="1"/>
</dbReference>
<dbReference type="PIRSF" id="PIRSF000429">
    <property type="entry name" value="Ac-CoA_Ac_transf"/>
    <property type="match status" value="1"/>
</dbReference>
<dbReference type="SUPFAM" id="SSF53901">
    <property type="entry name" value="Thiolase-like"/>
    <property type="match status" value="2"/>
</dbReference>
<dbReference type="PROSITE" id="PS00098">
    <property type="entry name" value="THIOLASE_1"/>
    <property type="match status" value="1"/>
</dbReference>
<dbReference type="PROSITE" id="PS00737">
    <property type="entry name" value="THIOLASE_2"/>
    <property type="match status" value="1"/>
</dbReference>
<dbReference type="PROSITE" id="PS00099">
    <property type="entry name" value="THIOLASE_3"/>
    <property type="match status" value="1"/>
</dbReference>